<name>RS5_THIDA</name>
<proteinExistence type="inferred from homology"/>
<sequence length="171" mass="17917">MARTAPTSNEERGDGLREKMISVNRVTKVVKGGRIMGFAALTVVGDGDGGIGMGKGKSREVPVAVQKAMEEARRKLVKISLKNGTFHHTVVGQHGASRVLIQPASEGTGIIAGGAMRAVFEVMGVQNVLAKCLGSTNPYNVVRATIDGLMKMSTPSEIAAKRGKSVEDITG</sequence>
<reference key="1">
    <citation type="journal article" date="2006" name="J. Bacteriol.">
        <title>The genome sequence of the obligately chemolithoautotrophic, facultatively anaerobic bacterium Thiobacillus denitrificans.</title>
        <authorList>
            <person name="Beller H.R."/>
            <person name="Chain P.S."/>
            <person name="Letain T.E."/>
            <person name="Chakicherla A."/>
            <person name="Larimer F.W."/>
            <person name="Richardson P.M."/>
            <person name="Coleman M.A."/>
            <person name="Wood A.P."/>
            <person name="Kelly D.P."/>
        </authorList>
    </citation>
    <scope>NUCLEOTIDE SEQUENCE [LARGE SCALE GENOMIC DNA]</scope>
    <source>
        <strain>ATCC 25259 / T1</strain>
    </source>
</reference>
<dbReference type="EMBL" id="CP000116">
    <property type="protein sequence ID" value="AAZ96375.1"/>
    <property type="molecule type" value="Genomic_DNA"/>
</dbReference>
<dbReference type="RefSeq" id="WP_011310934.1">
    <property type="nucleotide sequence ID" value="NC_007404.1"/>
</dbReference>
<dbReference type="SMR" id="Q3SLN2"/>
<dbReference type="STRING" id="292415.Tbd_0422"/>
<dbReference type="KEGG" id="tbd:Tbd_0422"/>
<dbReference type="eggNOG" id="COG0098">
    <property type="taxonomic scope" value="Bacteria"/>
</dbReference>
<dbReference type="HOGENOM" id="CLU_065898_2_2_4"/>
<dbReference type="OrthoDB" id="9809045at2"/>
<dbReference type="Proteomes" id="UP000008291">
    <property type="component" value="Chromosome"/>
</dbReference>
<dbReference type="GO" id="GO:0015935">
    <property type="term" value="C:small ribosomal subunit"/>
    <property type="evidence" value="ECO:0007669"/>
    <property type="project" value="InterPro"/>
</dbReference>
<dbReference type="GO" id="GO:0019843">
    <property type="term" value="F:rRNA binding"/>
    <property type="evidence" value="ECO:0007669"/>
    <property type="project" value="UniProtKB-UniRule"/>
</dbReference>
<dbReference type="GO" id="GO:0003735">
    <property type="term" value="F:structural constituent of ribosome"/>
    <property type="evidence" value="ECO:0007669"/>
    <property type="project" value="InterPro"/>
</dbReference>
<dbReference type="GO" id="GO:0006412">
    <property type="term" value="P:translation"/>
    <property type="evidence" value="ECO:0007669"/>
    <property type="project" value="UniProtKB-UniRule"/>
</dbReference>
<dbReference type="FunFam" id="3.30.160.20:FF:000001">
    <property type="entry name" value="30S ribosomal protein S5"/>
    <property type="match status" value="1"/>
</dbReference>
<dbReference type="FunFam" id="3.30.230.10:FF:000002">
    <property type="entry name" value="30S ribosomal protein S5"/>
    <property type="match status" value="1"/>
</dbReference>
<dbReference type="Gene3D" id="3.30.160.20">
    <property type="match status" value="1"/>
</dbReference>
<dbReference type="Gene3D" id="3.30.230.10">
    <property type="match status" value="1"/>
</dbReference>
<dbReference type="HAMAP" id="MF_01307_B">
    <property type="entry name" value="Ribosomal_uS5_B"/>
    <property type="match status" value="1"/>
</dbReference>
<dbReference type="InterPro" id="IPR020568">
    <property type="entry name" value="Ribosomal_Su5_D2-typ_SF"/>
</dbReference>
<dbReference type="InterPro" id="IPR000851">
    <property type="entry name" value="Ribosomal_uS5"/>
</dbReference>
<dbReference type="InterPro" id="IPR005712">
    <property type="entry name" value="Ribosomal_uS5_bac-type"/>
</dbReference>
<dbReference type="InterPro" id="IPR005324">
    <property type="entry name" value="Ribosomal_uS5_C"/>
</dbReference>
<dbReference type="InterPro" id="IPR013810">
    <property type="entry name" value="Ribosomal_uS5_N"/>
</dbReference>
<dbReference type="InterPro" id="IPR018192">
    <property type="entry name" value="Ribosomal_uS5_N_CS"/>
</dbReference>
<dbReference type="InterPro" id="IPR014721">
    <property type="entry name" value="Ribsml_uS5_D2-typ_fold_subgr"/>
</dbReference>
<dbReference type="NCBIfam" id="TIGR01021">
    <property type="entry name" value="rpsE_bact"/>
    <property type="match status" value="1"/>
</dbReference>
<dbReference type="PANTHER" id="PTHR48277">
    <property type="entry name" value="MITOCHONDRIAL RIBOSOMAL PROTEIN S5"/>
    <property type="match status" value="1"/>
</dbReference>
<dbReference type="PANTHER" id="PTHR48277:SF1">
    <property type="entry name" value="MITOCHONDRIAL RIBOSOMAL PROTEIN S5"/>
    <property type="match status" value="1"/>
</dbReference>
<dbReference type="Pfam" id="PF00333">
    <property type="entry name" value="Ribosomal_S5"/>
    <property type="match status" value="1"/>
</dbReference>
<dbReference type="Pfam" id="PF03719">
    <property type="entry name" value="Ribosomal_S5_C"/>
    <property type="match status" value="1"/>
</dbReference>
<dbReference type="SUPFAM" id="SSF54768">
    <property type="entry name" value="dsRNA-binding domain-like"/>
    <property type="match status" value="1"/>
</dbReference>
<dbReference type="SUPFAM" id="SSF54211">
    <property type="entry name" value="Ribosomal protein S5 domain 2-like"/>
    <property type="match status" value="1"/>
</dbReference>
<dbReference type="PROSITE" id="PS00585">
    <property type="entry name" value="RIBOSOMAL_S5"/>
    <property type="match status" value="1"/>
</dbReference>
<dbReference type="PROSITE" id="PS50881">
    <property type="entry name" value="S5_DSRBD"/>
    <property type="match status" value="1"/>
</dbReference>
<protein>
    <recommendedName>
        <fullName evidence="1">Small ribosomal subunit protein uS5</fullName>
    </recommendedName>
    <alternativeName>
        <fullName evidence="2">30S ribosomal protein S5</fullName>
    </alternativeName>
</protein>
<feature type="chain" id="PRO_0000230377" description="Small ribosomal subunit protein uS5">
    <location>
        <begin position="1"/>
        <end position="171"/>
    </location>
</feature>
<feature type="domain" description="S5 DRBM" evidence="1">
    <location>
        <begin position="16"/>
        <end position="79"/>
    </location>
</feature>
<organism>
    <name type="scientific">Thiobacillus denitrificans (strain ATCC 25259 / T1)</name>
    <dbReference type="NCBI Taxonomy" id="292415"/>
    <lineage>
        <taxon>Bacteria</taxon>
        <taxon>Pseudomonadati</taxon>
        <taxon>Pseudomonadota</taxon>
        <taxon>Betaproteobacteria</taxon>
        <taxon>Nitrosomonadales</taxon>
        <taxon>Thiobacillaceae</taxon>
        <taxon>Thiobacillus</taxon>
    </lineage>
</organism>
<keyword id="KW-1185">Reference proteome</keyword>
<keyword id="KW-0687">Ribonucleoprotein</keyword>
<keyword id="KW-0689">Ribosomal protein</keyword>
<keyword id="KW-0694">RNA-binding</keyword>
<keyword id="KW-0699">rRNA-binding</keyword>
<accession>Q3SLN2</accession>
<gene>
    <name evidence="1" type="primary">rpsE</name>
    <name type="ordered locus">Tbd_0422</name>
</gene>
<comment type="function">
    <text evidence="1">With S4 and S12 plays an important role in translational accuracy.</text>
</comment>
<comment type="function">
    <text evidence="1">Located at the back of the 30S subunit body where it stabilizes the conformation of the head with respect to the body.</text>
</comment>
<comment type="subunit">
    <text evidence="1">Part of the 30S ribosomal subunit. Contacts proteins S4 and S8.</text>
</comment>
<comment type="domain">
    <text>The N-terminal domain interacts with the head of the 30S subunit; the C-terminal domain interacts with the body and contacts protein S4. The interaction surface between S4 and S5 is involved in control of translational fidelity.</text>
</comment>
<comment type="similarity">
    <text evidence="1">Belongs to the universal ribosomal protein uS5 family.</text>
</comment>
<evidence type="ECO:0000255" key="1">
    <source>
        <dbReference type="HAMAP-Rule" id="MF_01307"/>
    </source>
</evidence>
<evidence type="ECO:0000305" key="2"/>